<organism>
    <name type="scientific">Salmonella heidelberg (strain SL476)</name>
    <dbReference type="NCBI Taxonomy" id="454169"/>
    <lineage>
        <taxon>Bacteria</taxon>
        <taxon>Pseudomonadati</taxon>
        <taxon>Pseudomonadota</taxon>
        <taxon>Gammaproteobacteria</taxon>
        <taxon>Enterobacterales</taxon>
        <taxon>Enterobacteriaceae</taxon>
        <taxon>Salmonella</taxon>
    </lineage>
</organism>
<keyword id="KW-0328">Glycosyltransferase</keyword>
<keyword id="KW-0460">Magnesium</keyword>
<keyword id="KW-0665">Pyrimidine biosynthesis</keyword>
<keyword id="KW-0808">Transferase</keyword>
<gene>
    <name evidence="1" type="primary">pyrE</name>
    <name type="ordered locus">SeHA_C4059</name>
</gene>
<name>PYRE_SALHS</name>
<reference key="1">
    <citation type="journal article" date="2011" name="J. Bacteriol.">
        <title>Comparative genomics of 28 Salmonella enterica isolates: evidence for CRISPR-mediated adaptive sublineage evolution.</title>
        <authorList>
            <person name="Fricke W.F."/>
            <person name="Mammel M.K."/>
            <person name="McDermott P.F."/>
            <person name="Tartera C."/>
            <person name="White D.G."/>
            <person name="Leclerc J.E."/>
            <person name="Ravel J."/>
            <person name="Cebula T.A."/>
        </authorList>
    </citation>
    <scope>NUCLEOTIDE SEQUENCE [LARGE SCALE GENOMIC DNA]</scope>
    <source>
        <strain>SL476</strain>
    </source>
</reference>
<comment type="function">
    <text evidence="1">Catalyzes the transfer of a ribosyl phosphate group from 5-phosphoribose 1-diphosphate to orotate, leading to the formation of orotidine monophosphate (OMP).</text>
</comment>
<comment type="catalytic activity">
    <reaction evidence="1">
        <text>orotidine 5'-phosphate + diphosphate = orotate + 5-phospho-alpha-D-ribose 1-diphosphate</text>
        <dbReference type="Rhea" id="RHEA:10380"/>
        <dbReference type="ChEBI" id="CHEBI:30839"/>
        <dbReference type="ChEBI" id="CHEBI:33019"/>
        <dbReference type="ChEBI" id="CHEBI:57538"/>
        <dbReference type="ChEBI" id="CHEBI:58017"/>
        <dbReference type="EC" id="2.4.2.10"/>
    </reaction>
</comment>
<comment type="cofactor">
    <cofactor evidence="1">
        <name>Mg(2+)</name>
        <dbReference type="ChEBI" id="CHEBI:18420"/>
    </cofactor>
</comment>
<comment type="pathway">
    <text evidence="1">Pyrimidine metabolism; UMP biosynthesis via de novo pathway; UMP from orotate: step 1/2.</text>
</comment>
<comment type="subunit">
    <text evidence="1">Homodimer.</text>
</comment>
<comment type="similarity">
    <text evidence="1">Belongs to the purine/pyrimidine phosphoribosyltransferase family. PyrE subfamily.</text>
</comment>
<sequence>MKPYQRQFIEFALNKQVLKFGEFTLKSGRKSPYFFNAGLFNTGRDLALLGRFYAEALVDSGIEFDLLFGPAYKGIPIATTTAVALAEHHDKDLPYCFNRKEAKDHGEGGSLVGSALQGRVMLVDDVITAGTAIRESMEIIQAHGATLAGVLISLDRQERGRGEISAIQEVERDYGCKVISIITLKDLIAYLEEKPDMAEHLAAVRAYREEFGV</sequence>
<evidence type="ECO:0000255" key="1">
    <source>
        <dbReference type="HAMAP-Rule" id="MF_01208"/>
    </source>
</evidence>
<dbReference type="EC" id="2.4.2.10" evidence="1"/>
<dbReference type="EMBL" id="CP001120">
    <property type="protein sequence ID" value="ACF67952.1"/>
    <property type="molecule type" value="Genomic_DNA"/>
</dbReference>
<dbReference type="RefSeq" id="WP_000806167.1">
    <property type="nucleotide sequence ID" value="NC_011083.1"/>
</dbReference>
<dbReference type="SMR" id="B4T9Y5"/>
<dbReference type="KEGG" id="seh:SeHA_C4059"/>
<dbReference type="HOGENOM" id="CLU_074878_0_1_6"/>
<dbReference type="UniPathway" id="UPA00070">
    <property type="reaction ID" value="UER00119"/>
</dbReference>
<dbReference type="Proteomes" id="UP000001866">
    <property type="component" value="Chromosome"/>
</dbReference>
<dbReference type="GO" id="GO:0005737">
    <property type="term" value="C:cytoplasm"/>
    <property type="evidence" value="ECO:0007669"/>
    <property type="project" value="TreeGrafter"/>
</dbReference>
<dbReference type="GO" id="GO:0000287">
    <property type="term" value="F:magnesium ion binding"/>
    <property type="evidence" value="ECO:0007669"/>
    <property type="project" value="UniProtKB-UniRule"/>
</dbReference>
<dbReference type="GO" id="GO:0004588">
    <property type="term" value="F:orotate phosphoribosyltransferase activity"/>
    <property type="evidence" value="ECO:0007669"/>
    <property type="project" value="UniProtKB-UniRule"/>
</dbReference>
<dbReference type="GO" id="GO:0006207">
    <property type="term" value="P:'de novo' pyrimidine nucleobase biosynthetic process"/>
    <property type="evidence" value="ECO:0007669"/>
    <property type="project" value="TreeGrafter"/>
</dbReference>
<dbReference type="GO" id="GO:0044205">
    <property type="term" value="P:'de novo' UMP biosynthetic process"/>
    <property type="evidence" value="ECO:0007669"/>
    <property type="project" value="UniProtKB-UniRule"/>
</dbReference>
<dbReference type="GO" id="GO:0046132">
    <property type="term" value="P:pyrimidine ribonucleoside biosynthetic process"/>
    <property type="evidence" value="ECO:0007669"/>
    <property type="project" value="TreeGrafter"/>
</dbReference>
<dbReference type="CDD" id="cd06223">
    <property type="entry name" value="PRTases_typeI"/>
    <property type="match status" value="1"/>
</dbReference>
<dbReference type="FunFam" id="3.40.50.2020:FF:000008">
    <property type="entry name" value="Orotate phosphoribosyltransferase"/>
    <property type="match status" value="1"/>
</dbReference>
<dbReference type="Gene3D" id="3.40.50.2020">
    <property type="match status" value="1"/>
</dbReference>
<dbReference type="HAMAP" id="MF_01208">
    <property type="entry name" value="PyrE"/>
    <property type="match status" value="1"/>
</dbReference>
<dbReference type="InterPro" id="IPR023031">
    <property type="entry name" value="OPRT"/>
</dbReference>
<dbReference type="InterPro" id="IPR004467">
    <property type="entry name" value="Or_phspho_trans_dom"/>
</dbReference>
<dbReference type="InterPro" id="IPR000836">
    <property type="entry name" value="PRibTrfase_dom"/>
</dbReference>
<dbReference type="InterPro" id="IPR029057">
    <property type="entry name" value="PRTase-like"/>
</dbReference>
<dbReference type="NCBIfam" id="TIGR00336">
    <property type="entry name" value="pyrE"/>
    <property type="match status" value="1"/>
</dbReference>
<dbReference type="PANTHER" id="PTHR46683">
    <property type="entry name" value="OROTATE PHOSPHORIBOSYLTRANSFERASE 1-RELATED"/>
    <property type="match status" value="1"/>
</dbReference>
<dbReference type="PANTHER" id="PTHR46683:SF1">
    <property type="entry name" value="OROTATE PHOSPHORIBOSYLTRANSFERASE 1-RELATED"/>
    <property type="match status" value="1"/>
</dbReference>
<dbReference type="Pfam" id="PF00156">
    <property type="entry name" value="Pribosyltran"/>
    <property type="match status" value="1"/>
</dbReference>
<dbReference type="SUPFAM" id="SSF53271">
    <property type="entry name" value="PRTase-like"/>
    <property type="match status" value="1"/>
</dbReference>
<dbReference type="PROSITE" id="PS00103">
    <property type="entry name" value="PUR_PYR_PR_TRANSFER"/>
    <property type="match status" value="1"/>
</dbReference>
<feature type="chain" id="PRO_1000138828" description="Orotate phosphoribosyltransferase">
    <location>
        <begin position="1"/>
        <end position="213"/>
    </location>
</feature>
<feature type="binding site" description="in other chain" evidence="1">
    <location>
        <position position="26"/>
    </location>
    <ligand>
        <name>5-phospho-alpha-D-ribose 1-diphosphate</name>
        <dbReference type="ChEBI" id="CHEBI:58017"/>
        <note>ligand shared between dimeric partners</note>
    </ligand>
</feature>
<feature type="binding site" evidence="1">
    <location>
        <begin position="34"/>
        <end position="35"/>
    </location>
    <ligand>
        <name>orotate</name>
        <dbReference type="ChEBI" id="CHEBI:30839"/>
    </ligand>
</feature>
<feature type="binding site" description="in other chain" evidence="1">
    <location>
        <begin position="72"/>
        <end position="73"/>
    </location>
    <ligand>
        <name>5-phospho-alpha-D-ribose 1-diphosphate</name>
        <dbReference type="ChEBI" id="CHEBI:58017"/>
        <note>ligand shared between dimeric partners</note>
    </ligand>
</feature>
<feature type="binding site" evidence="1">
    <location>
        <position position="99"/>
    </location>
    <ligand>
        <name>5-phospho-alpha-D-ribose 1-diphosphate</name>
        <dbReference type="ChEBI" id="CHEBI:58017"/>
        <note>ligand shared between dimeric partners</note>
    </ligand>
</feature>
<feature type="binding site" description="in other chain" evidence="1">
    <location>
        <position position="100"/>
    </location>
    <ligand>
        <name>5-phospho-alpha-D-ribose 1-diphosphate</name>
        <dbReference type="ChEBI" id="CHEBI:58017"/>
        <note>ligand shared between dimeric partners</note>
    </ligand>
</feature>
<feature type="binding site" evidence="1">
    <location>
        <position position="103"/>
    </location>
    <ligand>
        <name>5-phospho-alpha-D-ribose 1-diphosphate</name>
        <dbReference type="ChEBI" id="CHEBI:58017"/>
        <note>ligand shared between dimeric partners</note>
    </ligand>
</feature>
<feature type="binding site" evidence="1">
    <location>
        <position position="105"/>
    </location>
    <ligand>
        <name>5-phospho-alpha-D-ribose 1-diphosphate</name>
        <dbReference type="ChEBI" id="CHEBI:58017"/>
        <note>ligand shared between dimeric partners</note>
    </ligand>
</feature>
<feature type="binding site" description="in other chain" evidence="1">
    <location>
        <begin position="124"/>
        <end position="132"/>
    </location>
    <ligand>
        <name>5-phospho-alpha-D-ribose 1-diphosphate</name>
        <dbReference type="ChEBI" id="CHEBI:58017"/>
        <note>ligand shared between dimeric partners</note>
    </ligand>
</feature>
<feature type="binding site" evidence="1">
    <location>
        <position position="128"/>
    </location>
    <ligand>
        <name>orotate</name>
        <dbReference type="ChEBI" id="CHEBI:30839"/>
    </ligand>
</feature>
<feature type="binding site" evidence="1">
    <location>
        <position position="156"/>
    </location>
    <ligand>
        <name>orotate</name>
        <dbReference type="ChEBI" id="CHEBI:30839"/>
    </ligand>
</feature>
<protein>
    <recommendedName>
        <fullName evidence="1">Orotate phosphoribosyltransferase</fullName>
        <shortName evidence="1">OPRT</shortName>
        <shortName evidence="1">OPRTase</shortName>
        <ecNumber evidence="1">2.4.2.10</ecNumber>
    </recommendedName>
</protein>
<accession>B4T9Y5</accession>
<proteinExistence type="inferred from homology"/>